<organism>
    <name type="scientific">Pongo pygmaeus</name>
    <name type="common">Bornean orangutan</name>
    <dbReference type="NCBI Taxonomy" id="9600"/>
    <lineage>
        <taxon>Eukaryota</taxon>
        <taxon>Metazoa</taxon>
        <taxon>Chordata</taxon>
        <taxon>Craniata</taxon>
        <taxon>Vertebrata</taxon>
        <taxon>Euteleostomi</taxon>
        <taxon>Mammalia</taxon>
        <taxon>Eutheria</taxon>
        <taxon>Euarchontoglires</taxon>
        <taxon>Primates</taxon>
        <taxon>Haplorrhini</taxon>
        <taxon>Catarrhini</taxon>
        <taxon>Hominidae</taxon>
        <taxon>Pongo</taxon>
    </lineage>
</organism>
<name>TRIM5_PONPY</name>
<evidence type="ECO:0000250" key="1"/>
<evidence type="ECO:0000250" key="2">
    <source>
        <dbReference type="UniProtKB" id="Q0PF16"/>
    </source>
</evidence>
<evidence type="ECO:0000250" key="3">
    <source>
        <dbReference type="UniProtKB" id="Q9C035"/>
    </source>
</evidence>
<evidence type="ECO:0000255" key="4"/>
<evidence type="ECO:0000255" key="5">
    <source>
        <dbReference type="PROSITE-ProRule" id="PRU00024"/>
    </source>
</evidence>
<evidence type="ECO:0000255" key="6">
    <source>
        <dbReference type="PROSITE-ProRule" id="PRU00175"/>
    </source>
</evidence>
<evidence type="ECO:0000255" key="7">
    <source>
        <dbReference type="PROSITE-ProRule" id="PRU00548"/>
    </source>
</evidence>
<evidence type="ECO:0000305" key="8"/>
<reference key="1">
    <citation type="journal article" date="2005" name="Gene">
        <title>Adaptive evolution of primate TRIM5alpha, a gene restricting HIV-1 infection.</title>
        <authorList>
            <person name="Liu H.L."/>
            <person name="Wang Y.Q."/>
            <person name="Liao C.H."/>
            <person name="Kuang Y.Q."/>
            <person name="Zheng Y.T."/>
            <person name="Su B."/>
        </authorList>
    </citation>
    <scope>NUCLEOTIDE SEQUENCE [GENOMIC DNA]</scope>
</reference>
<reference key="2">
    <citation type="journal article" date="2005" name="Proc. Natl. Acad. Sci. U.S.A.">
        <title>Positive selection of primate TRIM5alpha identifies a critical species-specific retroviral restriction domain.</title>
        <authorList>
            <person name="Sawyer S.L."/>
            <person name="Wu L.I."/>
            <person name="Emerman M."/>
            <person name="Malik H.S."/>
        </authorList>
    </citation>
    <scope>NUCLEOTIDE SEQUENCE [GENOMIC DNA]</scope>
</reference>
<reference key="3">
    <citation type="journal article" date="2006" name="Retrovirology">
        <title>Patterns of evolution of host proteins involved in retroviral pathogenesis.</title>
        <authorList>
            <person name="Ortiz M."/>
            <person name="Bleiber G."/>
            <person name="Martinez R."/>
            <person name="Kaessmann H."/>
            <person name="Telenti A."/>
        </authorList>
    </citation>
    <scope>NUCLEOTIDE SEQUENCE [GENOMIC DNA]</scope>
</reference>
<reference key="4">
    <citation type="submission" date="2005-02" db="EMBL/GenBank/DDBJ databases">
        <authorList>
            <person name="Ortiz M."/>
            <person name="Bleiber G."/>
            <person name="Martinez R."/>
            <person name="Telenti A."/>
        </authorList>
    </citation>
    <scope>SEQUENCE REVISION TO 384-385; 389; 396 AND 420</scope>
</reference>
<reference key="5">
    <citation type="submission" date="2004-11" db="EMBL/GenBank/DDBJ databases">
        <authorList>
            <consortium name="The German cDNA consortium"/>
        </authorList>
    </citation>
    <scope>NUCLEOTIDE SEQUENCE [LARGE SCALE MRNA]</scope>
    <source>
        <tissue>Kidney</tissue>
    </source>
</reference>
<reference key="6">
    <citation type="journal article" date="2005" name="J. Virol.">
        <title>The B30.2(SPRY) domain of the retroviral restriction factor TRIM5alpha exhibits lineage-specific length and sequence variation in primates.</title>
        <authorList>
            <person name="Song B."/>
            <person name="Gold B."/>
            <person name="O'Huigin C."/>
            <person name="Javanbakht H."/>
            <person name="Li X."/>
            <person name="Stremlau M."/>
            <person name="Winkler C."/>
            <person name="Dean M."/>
            <person name="Sodroski J."/>
        </authorList>
    </citation>
    <scope>NUCLEOTIDE SEQUENCE [GENOMIC DNA] OF 299-493</scope>
</reference>
<reference key="7">
    <citation type="journal article" date="2006" name="J. Virol.">
        <title>All three variable regions of the TRIM5alpha B30.2 domain can contribute to the specificity of retrovirus restriction.</title>
        <authorList>
            <person name="Ohkura S."/>
            <person name="Yap M.W."/>
            <person name="Sheldon T."/>
            <person name="Stoye J.P."/>
        </authorList>
    </citation>
    <scope>NUCLEOTIDE SEQUENCE [GENOMIC DNA] OF 300-493</scope>
</reference>
<accession>Q2YEM9</accession>
<accession>Q0NNX9</accession>
<accession>Q3ZEE6</accession>
<accession>Q50EW8</accession>
<accession>Q5D7I4</accession>
<accession>Q5RFC7</accession>
<comment type="function">
    <text evidence="3">Capsid-specific restriction factor that prevents infection from non-host-adapted retroviruses. Blocks viral replication early in the life cycle, after viral entry but before reverse transcription. In addition to acting as a capsid-specific restriction factor, also acts as a pattern recognition receptor that activates innate immune signaling in response to the retroviral capsid lattice. Binding to the viral capsid triggers its E3 ubiquitin ligase activity, and in concert with the heterodimeric ubiquitin conjugating enzyme complex UBE2V1-UBE2N (also known as UBC13-UEV1A complex) generates 'Lys-63'-linked polyubiquitin chains, which in turn are catalysts in the autophosphorylation of the MAP3K7/TAK1 complex (includes TAK1, TAB2, and TAB3). Activation of the MAP3K7/TAK1 complex by autophosphorylation results in the induction and expression of NF-kappa-B and MAPK-responsive inflammatory genes, thereby leading to an innate immune response in the infected cell. Plays a role in regulating autophagy through activation of autophagy regulator BECN1 by causing its dissociation from its inhibitors BCL2 and TAB2.</text>
</comment>
<comment type="catalytic activity">
    <reaction>
        <text>S-ubiquitinyl-[E2 ubiquitin-conjugating enzyme]-L-cysteine + [acceptor protein]-L-lysine = [E2 ubiquitin-conjugating enzyme]-L-cysteine + N(6)-ubiquitinyl-[acceptor protein]-L-lysine.</text>
        <dbReference type="EC" id="2.3.2.27"/>
    </reaction>
</comment>
<comment type="pathway">
    <text>Protein modification; protein ubiquitination.</text>
</comment>
<comment type="subunit">
    <text evidence="2 3">Can form homodimers and homotrimers. In addition to lower-order dimerization, also exhibits a higher-order multimerization and both low- and high-order multimerizations are essential for its restriction activity. Interacts with BTBD1 and BTBD2. Interacts with PSMC4, PSMC5, PSMD7 and HSPA8/HSC70. Interacts (via B30.2/SPRY domain) with HSPA1A/B. Interacts with PSMC2, MAP3K7/TAK1, TAB2 and TAB3. Interacts with SQSTM1. Interacts with TRIM6 and TRIM34. Interacts with ULK1 (phosphorylated form), GABARAP, GABARAPL1, GABARAPL2, MAP1LC3A, MAP1LC3C and BECN1.</text>
</comment>
<comment type="subcellular location">
    <subcellularLocation>
        <location evidence="2">Cytoplasm</location>
    </subcellularLocation>
    <subcellularLocation>
        <location evidence="2">Nucleus</location>
    </subcellularLocation>
    <text evidence="2">Predominantly localizes in cytoplasmic bodies. Localization may be influenced by the coexpression of other TRIM proteins, hence partial nuclear localization is observed in the presence of TRIM22 or TRIM27. In cytoplasmic bodies, colocalizes with proteasomal subunits and SQSTM1.</text>
</comment>
<comment type="domain">
    <text evidence="2 3">The B box-type zinc finger domain and the coiled-coil domain contribute to the higher and low order multimerization respectively which is essential for restriction activity. The coiled coil domain is important for higher order multimerization by promoting the initial dimerization.</text>
</comment>
<comment type="domain">
    <text evidence="1">The B30.2/SPRY domain acts as a capsid recognition domain. Polymorphisms in this domain explain the observed species-specific differences among orthologs (By similarity).</text>
</comment>
<comment type="domain">
    <text evidence="1">The RING-type zinc finger domain confers E3 ubiquitin ligase activity and is essential for retrovirus restriction activity, autoubiquitination and higher-order multimerization.</text>
</comment>
<comment type="PTM">
    <text evidence="1">Degraded in a proteasome-independent fashion in the absence of viral infection but in a proteasome-dependent fashion following exposure to restriction sensitive virus.</text>
</comment>
<comment type="PTM">
    <text evidence="1">Autoubiquitinated in a RING finger- and UBE2D2-dependent manner. Monoubiquitinated by TRIM21. Deubiquitinated by Yersinia YopJ. Ubiquitination may not lead to proteasomal degradation (By similarity).</text>
</comment>
<comment type="similarity">
    <text evidence="8">Belongs to the TRIM/RBCC family.</text>
</comment>
<gene>
    <name type="primary">TRIM5</name>
</gene>
<feature type="initiator methionine" description="Removed" evidence="3">
    <location>
        <position position="1"/>
    </location>
</feature>
<feature type="chain" id="PRO_0000273472" description="Tripartite motif-containing protein 5">
    <location>
        <begin position="2"/>
        <end position="493"/>
    </location>
</feature>
<feature type="domain" description="B30.2/SPRY" evidence="7">
    <location>
        <begin position="281"/>
        <end position="493"/>
    </location>
</feature>
<feature type="zinc finger region" description="RING-type" evidence="6">
    <location>
        <begin position="15"/>
        <end position="59"/>
    </location>
</feature>
<feature type="zinc finger region" description="B box-type" evidence="5">
    <location>
        <begin position="90"/>
        <end position="132"/>
    </location>
</feature>
<feature type="region of interest" description="Required for interaction with GABARAP and for autophagy" evidence="2">
    <location>
        <begin position="185"/>
        <end position="198"/>
    </location>
</feature>
<feature type="coiled-coil region" evidence="4">
    <location>
        <begin position="131"/>
        <end position="223"/>
    </location>
</feature>
<feature type="binding site" evidence="5">
    <location>
        <position position="95"/>
    </location>
    <ligand>
        <name>Zn(2+)</name>
        <dbReference type="ChEBI" id="CHEBI:29105"/>
    </ligand>
</feature>
<feature type="binding site" evidence="5">
    <location>
        <position position="98"/>
    </location>
    <ligand>
        <name>Zn(2+)</name>
        <dbReference type="ChEBI" id="CHEBI:29105"/>
    </ligand>
</feature>
<feature type="binding site" evidence="5">
    <location>
        <position position="117"/>
    </location>
    <ligand>
        <name>Zn(2+)</name>
        <dbReference type="ChEBI" id="CHEBI:29105"/>
    </ligand>
</feature>
<feature type="binding site" evidence="5">
    <location>
        <position position="123"/>
    </location>
    <ligand>
        <name>Zn(2+)</name>
        <dbReference type="ChEBI" id="CHEBI:29105"/>
    </ligand>
</feature>
<feature type="modified residue" description="N-acetylalanine" evidence="3">
    <location>
        <position position="2"/>
    </location>
</feature>
<feature type="modified residue" description="Phosphoserine" evidence="3">
    <location>
        <position position="86"/>
    </location>
</feature>
<feature type="sequence conflict" description="In Ref. 5; CAH89530." evidence="8" ref="5">
    <original>S</original>
    <variation>N</variation>
    <location>
        <position position="33"/>
    </location>
</feature>
<feature type="sequence conflict" description="In Ref. 3; AAY23161." evidence="8" ref="3">
    <original>S</original>
    <variation>N</variation>
    <location>
        <position position="180"/>
    </location>
</feature>
<feature type="sequence conflict" description="In Ref. 2; AAV91984, 3; AAY23161 and 5; CAH89530." evidence="8" ref="2 3 5">
    <original>V</original>
    <variation>I</variation>
    <location>
        <position position="253"/>
    </location>
</feature>
<feature type="sequence conflict" description="In Ref. 3; AAY23161." evidence="8" ref="3">
    <original>N</original>
    <variation>S</variation>
    <location>
        <position position="343"/>
    </location>
</feature>
<sequence>MASGILVNVKEEVTCPICLELLTQPLSLDCGHSFCQACLTANHKKSTLDKGERSCPVCRVSYQPKNIRPNRHVANIVEKLREVKLSPEGQKVDHCARHGEKLLLFCKEDGKVICWLCERSQEHRGHHTFLTEEVAQKYQVKLQAALEMLRQKQQEAEELEADIREEKASWKTQIQYDKTSVLADFEQLRDILDWEESNELQNLEKEEEDILKSLTKSETEMVQQTQSVRELISDVEHRLQGSVMELLQGVDGVIKRMQNVTLKKPETFPKNQRRVFRAPNLKGMLEVFRELTDVRRYWVDVTVAPNDISYAVISEDMRQVSCPEPQIIYGAQGTTYQTYVNFNYCTGILGSQSITSGKHYWEVDVSKKSAWILGVCAGFQPDAMYNIEQNENYQPQYGYWVIGLEEGVKCSAFQDGSFHNPSAPFIVPLSVIICPDRVGVFLDYEACTVSFFNITNHGFLIYKFSHCSFSQPVFPYLNPRKCRVPMTLCSPSS</sequence>
<proteinExistence type="evidence at transcript level"/>
<keyword id="KW-0007">Acetylation</keyword>
<keyword id="KW-0051">Antiviral defense</keyword>
<keyword id="KW-0072">Autophagy</keyword>
<keyword id="KW-0175">Coiled coil</keyword>
<keyword id="KW-0963">Cytoplasm</keyword>
<keyword id="KW-0391">Immunity</keyword>
<keyword id="KW-0399">Innate immunity</keyword>
<keyword id="KW-0479">Metal-binding</keyword>
<keyword id="KW-0539">Nucleus</keyword>
<keyword id="KW-0597">Phosphoprotein</keyword>
<keyword id="KW-0808">Transferase</keyword>
<keyword id="KW-0832">Ubl conjugation</keyword>
<keyword id="KW-0833">Ubl conjugation pathway</keyword>
<keyword id="KW-0862">Zinc</keyword>
<keyword id="KW-0863">Zinc-finger</keyword>
<dbReference type="EC" id="2.3.2.27"/>
<dbReference type="EMBL" id="AY899900">
    <property type="protein sequence ID" value="AAX86684.1"/>
    <property type="molecule type" value="Genomic_DNA"/>
</dbReference>
<dbReference type="EMBL" id="AY899894">
    <property type="protein sequence ID" value="AAX86684.1"/>
    <property type="status" value="JOINED"/>
    <property type="molecule type" value="Genomic_DNA"/>
</dbReference>
<dbReference type="EMBL" id="AY899895">
    <property type="protein sequence ID" value="AAX86684.1"/>
    <property type="status" value="JOINED"/>
    <property type="molecule type" value="Genomic_DNA"/>
</dbReference>
<dbReference type="EMBL" id="AY899896">
    <property type="protein sequence ID" value="AAX86684.1"/>
    <property type="status" value="JOINED"/>
    <property type="molecule type" value="Genomic_DNA"/>
</dbReference>
<dbReference type="EMBL" id="AY899897">
    <property type="protein sequence ID" value="AAX86684.1"/>
    <property type="status" value="JOINED"/>
    <property type="molecule type" value="Genomic_DNA"/>
</dbReference>
<dbReference type="EMBL" id="AY899898">
    <property type="protein sequence ID" value="AAX86684.1"/>
    <property type="status" value="JOINED"/>
    <property type="molecule type" value="Genomic_DNA"/>
</dbReference>
<dbReference type="EMBL" id="AY899899">
    <property type="protein sequence ID" value="AAX86684.1"/>
    <property type="status" value="JOINED"/>
    <property type="molecule type" value="Genomic_DNA"/>
</dbReference>
<dbReference type="EMBL" id="AY843513">
    <property type="protein sequence ID" value="AAV91984.1"/>
    <property type="molecule type" value="Genomic_DNA"/>
</dbReference>
<dbReference type="EMBL" id="AY923179">
    <property type="protein sequence ID" value="AAY23161.2"/>
    <property type="molecule type" value="Genomic_DNA"/>
</dbReference>
<dbReference type="EMBL" id="CR857231">
    <property type="protein sequence ID" value="CAH89530.1"/>
    <property type="molecule type" value="mRNA"/>
</dbReference>
<dbReference type="EMBL" id="AY710302">
    <property type="protein sequence ID" value="AAW55821.1"/>
    <property type="molecule type" value="Genomic_DNA"/>
</dbReference>
<dbReference type="EMBL" id="DQ437601">
    <property type="protein sequence ID" value="ABE28403.1"/>
    <property type="molecule type" value="Genomic_DNA"/>
</dbReference>
<dbReference type="SMR" id="Q2YEM9"/>
<dbReference type="UniPathway" id="UPA00143"/>
<dbReference type="GO" id="GO:0005634">
    <property type="term" value="C:nucleus"/>
    <property type="evidence" value="ECO:0007669"/>
    <property type="project" value="UniProtKB-SubCell"/>
</dbReference>
<dbReference type="GO" id="GO:0000932">
    <property type="term" value="C:P-body"/>
    <property type="evidence" value="ECO:0000250"/>
    <property type="project" value="UniProtKB"/>
</dbReference>
<dbReference type="GO" id="GO:0038187">
    <property type="term" value="F:pattern recognition receptor activity"/>
    <property type="evidence" value="ECO:0000250"/>
    <property type="project" value="UniProtKB"/>
</dbReference>
<dbReference type="GO" id="GO:0004842">
    <property type="term" value="F:ubiquitin-protein transferase activity"/>
    <property type="evidence" value="ECO:0000250"/>
    <property type="project" value="UniProtKB"/>
</dbReference>
<dbReference type="GO" id="GO:0008270">
    <property type="term" value="F:zinc ion binding"/>
    <property type="evidence" value="ECO:0007669"/>
    <property type="project" value="UniProtKB-KW"/>
</dbReference>
<dbReference type="GO" id="GO:0002218">
    <property type="term" value="P:activation of innate immune response"/>
    <property type="evidence" value="ECO:0000250"/>
    <property type="project" value="UniProtKB"/>
</dbReference>
<dbReference type="GO" id="GO:0006914">
    <property type="term" value="P:autophagy"/>
    <property type="evidence" value="ECO:0007669"/>
    <property type="project" value="UniProtKB-KW"/>
</dbReference>
<dbReference type="GO" id="GO:0051607">
    <property type="term" value="P:defense response to virus"/>
    <property type="evidence" value="ECO:0007669"/>
    <property type="project" value="UniProtKB-KW"/>
</dbReference>
<dbReference type="GO" id="GO:0045087">
    <property type="term" value="P:innate immune response"/>
    <property type="evidence" value="ECO:0007669"/>
    <property type="project" value="UniProtKB-KW"/>
</dbReference>
<dbReference type="GO" id="GO:0043123">
    <property type="term" value="P:positive regulation of canonical NF-kappaB signal transduction"/>
    <property type="evidence" value="ECO:0000250"/>
    <property type="project" value="UniProtKB"/>
</dbReference>
<dbReference type="GO" id="GO:0043410">
    <property type="term" value="P:positive regulation of MAPK cascade"/>
    <property type="evidence" value="ECO:0000250"/>
    <property type="project" value="UniProtKB"/>
</dbReference>
<dbReference type="GO" id="GO:0051092">
    <property type="term" value="P:positive regulation of NF-kappaB transcription factor activity"/>
    <property type="evidence" value="ECO:0000250"/>
    <property type="project" value="UniProtKB"/>
</dbReference>
<dbReference type="GO" id="GO:0070534">
    <property type="term" value="P:protein K63-linked ubiquitination"/>
    <property type="evidence" value="ECO:0000250"/>
    <property type="project" value="UniProtKB"/>
</dbReference>
<dbReference type="GO" id="GO:0031664">
    <property type="term" value="P:regulation of lipopolysaccharide-mediated signaling pathway"/>
    <property type="evidence" value="ECO:0000250"/>
    <property type="project" value="UniProtKB"/>
</dbReference>
<dbReference type="CDD" id="cd19761">
    <property type="entry name" value="Bbox2_TRIM5-like"/>
    <property type="match status" value="1"/>
</dbReference>
<dbReference type="CDD" id="cd16591">
    <property type="entry name" value="RING-HC_TRIM5-like_C-IV"/>
    <property type="match status" value="1"/>
</dbReference>
<dbReference type="CDD" id="cd15822">
    <property type="entry name" value="SPRY_PRY_TRIM5"/>
    <property type="match status" value="1"/>
</dbReference>
<dbReference type="FunFam" id="2.60.120.920:FF:000023">
    <property type="entry name" value="Tripartite motif-containing 5 (Predicted)"/>
    <property type="match status" value="1"/>
</dbReference>
<dbReference type="FunFam" id="3.30.160.60:FF:000386">
    <property type="entry name" value="Tripartite motif-containing 5 (Predicted)"/>
    <property type="match status" value="1"/>
</dbReference>
<dbReference type="FunFam" id="3.30.40.10:FF:000144">
    <property type="entry name" value="Tripartite motif-containing 5 (Predicted)"/>
    <property type="match status" value="1"/>
</dbReference>
<dbReference type="Gene3D" id="2.60.120.920">
    <property type="match status" value="1"/>
</dbReference>
<dbReference type="Gene3D" id="3.30.160.60">
    <property type="entry name" value="Classic Zinc Finger"/>
    <property type="match status" value="1"/>
</dbReference>
<dbReference type="Gene3D" id="3.30.40.10">
    <property type="entry name" value="Zinc/RING finger domain, C3HC4 (zinc finger)"/>
    <property type="match status" value="1"/>
</dbReference>
<dbReference type="InterPro" id="IPR001870">
    <property type="entry name" value="B30.2/SPRY"/>
</dbReference>
<dbReference type="InterPro" id="IPR043136">
    <property type="entry name" value="B30.2/SPRY_sf"/>
</dbReference>
<dbReference type="InterPro" id="IPR003879">
    <property type="entry name" value="Butyrophylin_SPRY"/>
</dbReference>
<dbReference type="InterPro" id="IPR013320">
    <property type="entry name" value="ConA-like_dom_sf"/>
</dbReference>
<dbReference type="InterPro" id="IPR003877">
    <property type="entry name" value="SPRY_dom"/>
</dbReference>
<dbReference type="InterPro" id="IPR050143">
    <property type="entry name" value="TRIM/RBCC"/>
</dbReference>
<dbReference type="InterPro" id="IPR027370">
    <property type="entry name" value="Znf-RING_euk"/>
</dbReference>
<dbReference type="InterPro" id="IPR000315">
    <property type="entry name" value="Znf_B-box"/>
</dbReference>
<dbReference type="InterPro" id="IPR001841">
    <property type="entry name" value="Znf_RING"/>
</dbReference>
<dbReference type="InterPro" id="IPR013083">
    <property type="entry name" value="Znf_RING/FYVE/PHD"/>
</dbReference>
<dbReference type="InterPro" id="IPR017907">
    <property type="entry name" value="Znf_RING_CS"/>
</dbReference>
<dbReference type="PANTHER" id="PTHR24103">
    <property type="entry name" value="E3 UBIQUITIN-PROTEIN LIGASE TRIM"/>
    <property type="match status" value="1"/>
</dbReference>
<dbReference type="Pfam" id="PF00622">
    <property type="entry name" value="SPRY"/>
    <property type="match status" value="1"/>
</dbReference>
<dbReference type="Pfam" id="PF00643">
    <property type="entry name" value="zf-B_box"/>
    <property type="match status" value="1"/>
</dbReference>
<dbReference type="Pfam" id="PF13445">
    <property type="entry name" value="zf-RING_UBOX"/>
    <property type="match status" value="1"/>
</dbReference>
<dbReference type="PRINTS" id="PR01407">
    <property type="entry name" value="BUTYPHLNCDUF"/>
</dbReference>
<dbReference type="SMART" id="SM00336">
    <property type="entry name" value="BBOX"/>
    <property type="match status" value="1"/>
</dbReference>
<dbReference type="SMART" id="SM00184">
    <property type="entry name" value="RING"/>
    <property type="match status" value="1"/>
</dbReference>
<dbReference type="SMART" id="SM00449">
    <property type="entry name" value="SPRY"/>
    <property type="match status" value="1"/>
</dbReference>
<dbReference type="SUPFAM" id="SSF57845">
    <property type="entry name" value="B-box zinc-binding domain"/>
    <property type="match status" value="1"/>
</dbReference>
<dbReference type="SUPFAM" id="SSF49899">
    <property type="entry name" value="Concanavalin A-like lectins/glucanases"/>
    <property type="match status" value="1"/>
</dbReference>
<dbReference type="SUPFAM" id="SSF57850">
    <property type="entry name" value="RING/U-box"/>
    <property type="match status" value="1"/>
</dbReference>
<dbReference type="PROSITE" id="PS50188">
    <property type="entry name" value="B302_SPRY"/>
    <property type="match status" value="1"/>
</dbReference>
<dbReference type="PROSITE" id="PS50119">
    <property type="entry name" value="ZF_BBOX"/>
    <property type="match status" value="1"/>
</dbReference>
<dbReference type="PROSITE" id="PS00518">
    <property type="entry name" value="ZF_RING_1"/>
    <property type="match status" value="1"/>
</dbReference>
<dbReference type="PROSITE" id="PS50089">
    <property type="entry name" value="ZF_RING_2"/>
    <property type="match status" value="1"/>
</dbReference>
<protein>
    <recommendedName>
        <fullName>Tripartite motif-containing protein 5</fullName>
        <ecNumber>2.3.2.27</ecNumber>
    </recommendedName>
    <alternativeName>
        <fullName evidence="8">RING-type E3 ubiquitin transferase TRIM5</fullName>
    </alternativeName>
    <alternativeName>
        <fullName>TRIM5alpha</fullName>
    </alternativeName>
</protein>